<proteinExistence type="inferred from homology"/>
<sequence>MVAGKRTGAAKGSRHNKKYWRKGTNIDDIEDSIHIKSRQAATGGVISEMKDEDLFIVDRTATANKPVVPKLTKKQQAALEKITKNITQEHVTLPKPSTTSKILKKPAKLPRGNAILALKKGPKAAAPAAKKKNFDVWTTDLTPKIPKSKLENQEAAEHFLKVVKKKQPKTPGKSITSLLPAVQIAEGGASYNPESAEYQEYVAKIAGEEQKLIDHEAKIKAGIEPQWEKVTTEHERFLEMAEGLRIHPKYGKDDEEEEEAGNSEKSMKTGGEAEPKSQRVECDRMTKEQKKKKAKAQKLDKEEKRRLEEKAKEQDSHNVYRTKQLHKELDEEEKQRHEESEVRKKEKLINKLTKRQQLGKGKFVDAEDPFLLQEELTGNLRQLKPQGHVLDDRMKSLQRRNMLPIGGDKEKRRIKNRLKSKVVEKRSAKNIVKGSRVI</sequence>
<gene>
    <name evidence="5" type="ORF">Y39B6A.33</name>
</gene>
<dbReference type="EMBL" id="AL132948">
    <property type="protein sequence ID" value="CAC51048.1"/>
    <property type="molecule type" value="Genomic_DNA"/>
</dbReference>
<dbReference type="PIR" id="T45041">
    <property type="entry name" value="T45041"/>
</dbReference>
<dbReference type="RefSeq" id="NP_001367001.1">
    <property type="nucleotide sequence ID" value="NM_001380869.2"/>
</dbReference>
<dbReference type="RefSeq" id="NP_741664.1">
    <property type="nucleotide sequence ID" value="NM_171574.4"/>
</dbReference>
<dbReference type="SMR" id="Q9NEU5"/>
<dbReference type="BioGRID" id="45208">
    <property type="interactions" value="9"/>
</dbReference>
<dbReference type="FunCoup" id="Q9NEU5">
    <property type="interactions" value="2137"/>
</dbReference>
<dbReference type="STRING" id="6239.Y39B6A.33.1"/>
<dbReference type="PaxDb" id="6239-Y39B6A.33"/>
<dbReference type="PeptideAtlas" id="Q9NEU5"/>
<dbReference type="EnsemblMetazoa" id="Y39B6A.33.1">
    <property type="protein sequence ID" value="Y39B6A.33.1"/>
    <property type="gene ID" value="WBGene00012692"/>
</dbReference>
<dbReference type="GeneID" id="180246"/>
<dbReference type="UCSC" id="Y39B6A.33">
    <property type="organism name" value="c. elegans"/>
</dbReference>
<dbReference type="AGR" id="WB:WBGene00012692"/>
<dbReference type="WormBase" id="Y39B6A.33">
    <property type="protein sequence ID" value="CE21690"/>
    <property type="gene ID" value="WBGene00012692"/>
</dbReference>
<dbReference type="eggNOG" id="KOG2823">
    <property type="taxonomic scope" value="Eukaryota"/>
</dbReference>
<dbReference type="GeneTree" id="ENSGT00390000017267"/>
<dbReference type="HOGENOM" id="CLU_050123_0_0_1"/>
<dbReference type="InParanoid" id="Q9NEU5"/>
<dbReference type="OMA" id="KPYDLWG"/>
<dbReference type="OrthoDB" id="5072at2759"/>
<dbReference type="PhylomeDB" id="Q9NEU5"/>
<dbReference type="PRO" id="PR:Q9NEU5"/>
<dbReference type="Proteomes" id="UP000001940">
    <property type="component" value="Chromosome V"/>
</dbReference>
<dbReference type="Bgee" id="WBGene00012692">
    <property type="expression patterns" value="Expressed in larva and 4 other cell types or tissues"/>
</dbReference>
<dbReference type="GO" id="GO:0005730">
    <property type="term" value="C:nucleolus"/>
    <property type="evidence" value="ECO:0007005"/>
    <property type="project" value="WormBase"/>
</dbReference>
<dbReference type="GO" id="GO:0005654">
    <property type="term" value="C:nucleoplasm"/>
    <property type="evidence" value="ECO:0000250"/>
    <property type="project" value="UniProtKB"/>
</dbReference>
<dbReference type="GO" id="GO:0008097">
    <property type="term" value="F:5S rRNA binding"/>
    <property type="evidence" value="ECO:0000318"/>
    <property type="project" value="GO_Central"/>
</dbReference>
<dbReference type="GO" id="GO:1901857">
    <property type="term" value="P:positive regulation of cellular respiration"/>
    <property type="evidence" value="ECO:0000315"/>
    <property type="project" value="WormBase"/>
</dbReference>
<dbReference type="GO" id="GO:0000027">
    <property type="term" value="P:ribosomal large subunit assembly"/>
    <property type="evidence" value="ECO:0000250"/>
    <property type="project" value="UniProtKB"/>
</dbReference>
<dbReference type="GO" id="GO:0006364">
    <property type="term" value="P:rRNA processing"/>
    <property type="evidence" value="ECO:0000318"/>
    <property type="project" value="GO_Central"/>
</dbReference>
<dbReference type="InterPro" id="IPR011687">
    <property type="entry name" value="Nop53/GLTSCR2"/>
</dbReference>
<dbReference type="PANTHER" id="PTHR14211">
    <property type="entry name" value="GLIOMA SUPPRESSOR CANDIDATE REGION GENE 2"/>
    <property type="match status" value="1"/>
</dbReference>
<dbReference type="PANTHER" id="PTHR14211:SF7">
    <property type="entry name" value="RIBOSOME BIOGENESIS PROTEIN NOP53"/>
    <property type="match status" value="1"/>
</dbReference>
<dbReference type="Pfam" id="PF07767">
    <property type="entry name" value="Nop53"/>
    <property type="match status" value="1"/>
</dbReference>
<dbReference type="PIRSF" id="PIRSF017302">
    <property type="entry name" value="Gltscr2"/>
    <property type="match status" value="1"/>
</dbReference>
<name>NOP53_CAEEL</name>
<organism>
    <name type="scientific">Caenorhabditis elegans</name>
    <dbReference type="NCBI Taxonomy" id="6239"/>
    <lineage>
        <taxon>Eukaryota</taxon>
        <taxon>Metazoa</taxon>
        <taxon>Ecdysozoa</taxon>
        <taxon>Nematoda</taxon>
        <taxon>Chromadorea</taxon>
        <taxon>Rhabditida</taxon>
        <taxon>Rhabditina</taxon>
        <taxon>Rhabditomorpha</taxon>
        <taxon>Rhabditoidea</taxon>
        <taxon>Rhabditidae</taxon>
        <taxon>Peloderinae</taxon>
        <taxon>Caenorhabditis</taxon>
    </lineage>
</organism>
<accession>Q9NEU5</accession>
<feature type="chain" id="PRO_0000218961" description="Ribosome biogenesis protein NOP53">
    <location>
        <begin position="1"/>
        <end position="438"/>
    </location>
</feature>
<feature type="region of interest" description="Disordered" evidence="2">
    <location>
        <begin position="1"/>
        <end position="23"/>
    </location>
</feature>
<feature type="region of interest" description="Disordered" evidence="2">
    <location>
        <begin position="247"/>
        <end position="346"/>
    </location>
</feature>
<feature type="compositionally biased region" description="Basic residues" evidence="2">
    <location>
        <begin position="12"/>
        <end position="21"/>
    </location>
</feature>
<feature type="compositionally biased region" description="Basic and acidic residues" evidence="2">
    <location>
        <begin position="265"/>
        <end position="288"/>
    </location>
</feature>
<feature type="compositionally biased region" description="Basic and acidic residues" evidence="2">
    <location>
        <begin position="297"/>
        <end position="318"/>
    </location>
</feature>
<feature type="compositionally biased region" description="Basic and acidic residues" evidence="2">
    <location>
        <begin position="325"/>
        <end position="346"/>
    </location>
</feature>
<evidence type="ECO:0000250" key="1">
    <source>
        <dbReference type="UniProtKB" id="Q9NZM5"/>
    </source>
</evidence>
<evidence type="ECO:0000256" key="2">
    <source>
        <dbReference type="SAM" id="MobiDB-lite"/>
    </source>
</evidence>
<evidence type="ECO:0000269" key="3">
    <source>
    </source>
</evidence>
<evidence type="ECO:0000305" key="4"/>
<evidence type="ECO:0000312" key="5">
    <source>
        <dbReference type="WormBase" id="Y39B6A.33"/>
    </source>
</evidence>
<protein>
    <recommendedName>
        <fullName evidence="4">Ribosome biogenesis protein NOP53</fullName>
    </recommendedName>
</protein>
<reference key="1">
    <citation type="journal article" date="1998" name="Science">
        <title>Genome sequence of the nematode C. elegans: a platform for investigating biology.</title>
        <authorList>
            <consortium name="The C. elegans sequencing consortium"/>
        </authorList>
    </citation>
    <scope>NUCLEOTIDE SEQUENCE [LARGE SCALE GENOMIC DNA]</scope>
    <source>
        <strain>Bristol N2</strain>
    </source>
</reference>
<reference key="2">
    <citation type="journal article" date="2014" name="Proc. Natl. Acad. Sci. U.S.A.">
        <title>GLTSCR2/PICT1 links mitochondrial stress and Myc signaling.</title>
        <authorList>
            <person name="Yoon J.C."/>
            <person name="Ling A.J."/>
            <person name="Isik M."/>
            <person name="Lee D.Y."/>
            <person name="Steinbaugh M.J."/>
            <person name="Sack L.M."/>
            <person name="Boduch A.N."/>
            <person name="Blackwell T.K."/>
            <person name="Sinclair D.A."/>
            <person name="Elledge S.J."/>
        </authorList>
    </citation>
    <scope>DISRUPTION PHENOTYPE</scope>
</reference>
<keyword id="KW-0539">Nucleus</keyword>
<keyword id="KW-1185">Reference proteome</keyword>
<keyword id="KW-0690">Ribosome biogenesis</keyword>
<comment type="function">
    <text evidence="1">May play a role in ribosome biogenesis, being required for integration of the 5S RNP into the ribosomal large subunit.</text>
</comment>
<comment type="subcellular location">
    <subcellularLocation>
        <location evidence="1">Nucleus</location>
        <location evidence="1">Nucleolus</location>
    </subcellularLocation>
    <subcellularLocation>
        <location evidence="1">Nucleus</location>
        <location evidence="1">Nucleoplasm</location>
    </subcellularLocation>
</comment>
<comment type="disruption phenotype">
    <text evidence="3">RNAi-mediated inactivation of the gene induces lower oxygen consumption rate of the worms.</text>
</comment>
<comment type="similarity">
    <text evidence="4">Belongs to the NOP53 family.</text>
</comment>